<accession>Q758V8</accession>
<name>HDA3_EREGS</name>
<evidence type="ECO:0000250" key="1"/>
<evidence type="ECO:0000255" key="2"/>
<evidence type="ECO:0000256" key="3">
    <source>
        <dbReference type="SAM" id="MobiDB-lite"/>
    </source>
</evidence>
<evidence type="ECO:0000305" key="4"/>
<proteinExistence type="inferred from homology"/>
<keyword id="KW-0156">Chromatin regulator</keyword>
<keyword id="KW-0175">Coiled coil</keyword>
<keyword id="KW-0539">Nucleus</keyword>
<keyword id="KW-1185">Reference proteome</keyword>
<keyword id="KW-0678">Repressor</keyword>
<keyword id="KW-0804">Transcription</keyword>
<keyword id="KW-0805">Transcription regulation</keyword>
<reference key="1">
    <citation type="journal article" date="2004" name="Science">
        <title>The Ashbya gossypii genome as a tool for mapping the ancient Saccharomyces cerevisiae genome.</title>
        <authorList>
            <person name="Dietrich F.S."/>
            <person name="Voegeli S."/>
            <person name="Brachat S."/>
            <person name="Lerch A."/>
            <person name="Gates K."/>
            <person name="Steiner S."/>
            <person name="Mohr C."/>
            <person name="Poehlmann R."/>
            <person name="Luedi P."/>
            <person name="Choi S."/>
            <person name="Wing R.A."/>
            <person name="Flavier A."/>
            <person name="Gaffney T.D."/>
            <person name="Philippsen P."/>
        </authorList>
    </citation>
    <scope>NUCLEOTIDE SEQUENCE [LARGE SCALE GENOMIC DNA]</scope>
    <source>
        <strain>ATCC 10895 / CBS 109.51 / FGSC 9923 / NRRL Y-1056</strain>
    </source>
</reference>
<reference key="2">
    <citation type="journal article" date="2013" name="G3 (Bethesda)">
        <title>Genomes of Ashbya fungi isolated from insects reveal four mating-type loci, numerous translocations, lack of transposons, and distinct gene duplications.</title>
        <authorList>
            <person name="Dietrich F.S."/>
            <person name="Voegeli S."/>
            <person name="Kuo S."/>
            <person name="Philippsen P."/>
        </authorList>
    </citation>
    <scope>GENOME REANNOTATION</scope>
    <scope>SEQUENCE REVISION TO 31</scope>
    <source>
        <strain>ATCC 10895 / CBS 109.51 / FGSC 9923 / NRRL Y-1056</strain>
    </source>
</reference>
<feature type="chain" id="PRO_0000083931" description="HDA1 complex subunit 3">
    <location>
        <begin position="1"/>
        <end position="637"/>
    </location>
</feature>
<feature type="region of interest" description="Disordered" evidence="3">
    <location>
        <begin position="618"/>
        <end position="637"/>
    </location>
</feature>
<feature type="coiled-coil region" evidence="2">
    <location>
        <begin position="443"/>
        <end position="608"/>
    </location>
</feature>
<feature type="compositionally biased region" description="Polar residues" evidence="3">
    <location>
        <begin position="618"/>
        <end position="628"/>
    </location>
</feature>
<sequence>MDLLKILDTAPEPAIVDARTMGVSGDTSGDYWLPAPMCLYQKELTDQIVSLHYSDILKYFETSDYKEDIVLQSMKTMCLNSQLVATHPYLLIDHFMPKSLLTKDIPGHLSETSGKFCVLRDLMNLVQEYAMETLLVCRPGRTMDLLEALLLGNKVNIRRHDGQSIKTKQKKTRYACTCHLVPSEAAKAIALERDTRLGLVICVDPTVDTRAPHIQSILAQQQRKYGRTVPTIRVAVINSIEHCELFFGKTLDRNTRDYLVNVSAAMVVLRDVVGTLPPDLRPIYSQNLRYLIDWLDTPERPWPLPDVYPVKVYTAMDVERSLLTEVKYSQNNDSLEDAFTNGKKRNHRSHGQGNGGNAPISYYQIKRLKNDYIGNPLKQDMEQLTGISNNKCKDGLLDYHLSSGTLTHKLLQAIGSVYENLQLQDVELSHFAAVEQNQTAIFESHKEALSTIKKQLEDAISKKQRNNTLVDEYLKNSQNERDQLEVLEADISDLLGQLDGRHQGFKQLWDDLNQTENTLALYRTNANAKRSEASYMEEELIRAEKSVAESENEQTQLLRDVEHLEALIQDCREKDKQQQQVIKNKSKDMEDDITQKKEAVLALQNQLGTIMEYLKQLQTPRVRSPSNGHRSKHRGYV</sequence>
<protein>
    <recommendedName>
        <fullName>HDA1 complex subunit 3</fullName>
    </recommendedName>
    <alternativeName>
        <fullName>Histone deacetylase complex 1 subunit 3</fullName>
    </alternativeName>
</protein>
<organism>
    <name type="scientific">Eremothecium gossypii (strain ATCC 10895 / CBS 109.51 / FGSC 9923 / NRRL Y-1056)</name>
    <name type="common">Yeast</name>
    <name type="synonym">Ashbya gossypii</name>
    <dbReference type="NCBI Taxonomy" id="284811"/>
    <lineage>
        <taxon>Eukaryota</taxon>
        <taxon>Fungi</taxon>
        <taxon>Dikarya</taxon>
        <taxon>Ascomycota</taxon>
        <taxon>Saccharomycotina</taxon>
        <taxon>Saccharomycetes</taxon>
        <taxon>Saccharomycetales</taxon>
        <taxon>Saccharomycetaceae</taxon>
        <taxon>Eremothecium</taxon>
    </lineage>
</organism>
<comment type="function">
    <text evidence="1">Required for activity of histone deacetylase complexes that are responsible for the deacetylation of lysine residues on the N-terminal part of the core histones (H2A, H2B, H3 and H4). Histone deacetylation gives a tag for epigenetic repression and plays an important role in transcriptional regulation, cell cycle progression and developmental events (By similarity).</text>
</comment>
<comment type="subunit">
    <text evidence="1">Probable component of some histone deacetylase complex.</text>
</comment>
<comment type="subcellular location">
    <subcellularLocation>
        <location evidence="1">Nucleus</location>
    </subcellularLocation>
</comment>
<comment type="similarity">
    <text evidence="4">Belongs to the HDA2/3 family. HDA3 subfamily.</text>
</comment>
<gene>
    <name type="primary">HDA3</name>
    <name type="ordered locus">AEL270W</name>
</gene>
<dbReference type="EMBL" id="AE016818">
    <property type="protein sequence ID" value="AAS52414.2"/>
    <property type="molecule type" value="Genomic_DNA"/>
</dbReference>
<dbReference type="RefSeq" id="NP_984590.2">
    <property type="nucleotide sequence ID" value="NM_209943.2"/>
</dbReference>
<dbReference type="SMR" id="Q758V8"/>
<dbReference type="FunCoup" id="Q758V8">
    <property type="interactions" value="68"/>
</dbReference>
<dbReference type="STRING" id="284811.Q758V8"/>
<dbReference type="EnsemblFungi" id="AAS52414">
    <property type="protein sequence ID" value="AAS52414"/>
    <property type="gene ID" value="AGOS_AEL270W"/>
</dbReference>
<dbReference type="GeneID" id="4620770"/>
<dbReference type="KEGG" id="ago:AGOS_AEL270W"/>
<dbReference type="eggNOG" id="ENOG502QT9V">
    <property type="taxonomic scope" value="Eukaryota"/>
</dbReference>
<dbReference type="HOGENOM" id="CLU_026579_0_0_1"/>
<dbReference type="InParanoid" id="Q758V8"/>
<dbReference type="OMA" id="GDYWLPT"/>
<dbReference type="OrthoDB" id="3647690at2759"/>
<dbReference type="Proteomes" id="UP000000591">
    <property type="component" value="Chromosome V"/>
</dbReference>
<dbReference type="GO" id="GO:0005829">
    <property type="term" value="C:cytosol"/>
    <property type="evidence" value="ECO:0007669"/>
    <property type="project" value="EnsemblFungi"/>
</dbReference>
<dbReference type="GO" id="GO:0070823">
    <property type="term" value="C:HDA1 complex"/>
    <property type="evidence" value="ECO:0007669"/>
    <property type="project" value="EnsemblFungi"/>
</dbReference>
<dbReference type="GO" id="GO:0003682">
    <property type="term" value="F:chromatin binding"/>
    <property type="evidence" value="ECO:0000318"/>
    <property type="project" value="GO_Central"/>
</dbReference>
<dbReference type="GO" id="GO:0003677">
    <property type="term" value="F:DNA binding"/>
    <property type="evidence" value="ECO:0000318"/>
    <property type="project" value="GO_Central"/>
</dbReference>
<dbReference type="GO" id="GO:0004407">
    <property type="term" value="F:histone deacetylase activity"/>
    <property type="evidence" value="ECO:0007669"/>
    <property type="project" value="EnsemblFungi"/>
</dbReference>
<dbReference type="GO" id="GO:0140750">
    <property type="term" value="F:nucleosome array spacer activity"/>
    <property type="evidence" value="ECO:0000318"/>
    <property type="project" value="GO_Central"/>
</dbReference>
<dbReference type="GO" id="GO:0007059">
    <property type="term" value="P:chromosome segregation"/>
    <property type="evidence" value="ECO:0007669"/>
    <property type="project" value="EnsemblFungi"/>
</dbReference>
<dbReference type="GO" id="GO:0000122">
    <property type="term" value="P:negative regulation of transcription by RNA polymerase II"/>
    <property type="evidence" value="ECO:0007669"/>
    <property type="project" value="EnsemblFungi"/>
</dbReference>
<dbReference type="GO" id="GO:0045944">
    <property type="term" value="P:positive regulation of transcription by RNA polymerase II"/>
    <property type="evidence" value="ECO:0000318"/>
    <property type="project" value="GO_Central"/>
</dbReference>
<dbReference type="GO" id="GO:0031047">
    <property type="term" value="P:regulatory ncRNA-mediated gene silencing"/>
    <property type="evidence" value="ECO:0007669"/>
    <property type="project" value="EnsemblFungi"/>
</dbReference>
<dbReference type="Gene3D" id="3.40.50.12360">
    <property type="match status" value="1"/>
</dbReference>
<dbReference type="InterPro" id="IPR038609">
    <property type="entry name" value="HDA1_su2/3_sf"/>
</dbReference>
<dbReference type="InterPro" id="IPR021006">
    <property type="entry name" value="Hda2/3"/>
</dbReference>
<dbReference type="InterPro" id="IPR026216">
    <property type="entry name" value="HDA3"/>
</dbReference>
<dbReference type="Pfam" id="PF11496">
    <property type="entry name" value="HDA2-3"/>
    <property type="match status" value="1"/>
</dbReference>
<dbReference type="PRINTS" id="PR02093">
    <property type="entry name" value="HDA1SUBUNIT3"/>
</dbReference>